<gene>
    <name type="primary">ydaK</name>
    <name type="ordered locus">BSU04280</name>
</gene>
<feature type="chain" id="PRO_0000386534" description="Uncharacterized membrane protein YdaK">
    <location>
        <begin position="1"/>
        <end position="283"/>
    </location>
</feature>
<feature type="transmembrane region" description="Helical" evidence="1">
    <location>
        <begin position="11"/>
        <end position="31"/>
    </location>
</feature>
<feature type="transmembrane region" description="Helical" evidence="1">
    <location>
        <begin position="35"/>
        <end position="55"/>
    </location>
</feature>
<feature type="transmembrane region" description="Helical" evidence="1">
    <location>
        <begin position="56"/>
        <end position="76"/>
    </location>
</feature>
<feature type="transmembrane region" description="Helical" evidence="1">
    <location>
        <begin position="93"/>
        <end position="113"/>
    </location>
</feature>
<feature type="domain" description="GGDEF" evidence="2">
    <location>
        <begin position="162"/>
        <end position="283"/>
    </location>
</feature>
<evidence type="ECO:0000255" key="1"/>
<evidence type="ECO:0000255" key="2">
    <source>
        <dbReference type="PROSITE-ProRule" id="PRU00095"/>
    </source>
</evidence>
<evidence type="ECO:0000305" key="3"/>
<dbReference type="EMBL" id="AB001488">
    <property type="protein sequence ID" value="BAA19265.1"/>
    <property type="molecule type" value="Genomic_DNA"/>
</dbReference>
<dbReference type="EMBL" id="AL009126">
    <property type="protein sequence ID" value="CAB12235.1"/>
    <property type="molecule type" value="Genomic_DNA"/>
</dbReference>
<dbReference type="PIR" id="B69769">
    <property type="entry name" value="B69769"/>
</dbReference>
<dbReference type="SMR" id="P96585"/>
<dbReference type="FunCoup" id="P96585">
    <property type="interactions" value="117"/>
</dbReference>
<dbReference type="STRING" id="224308.BSU04280"/>
<dbReference type="PaxDb" id="224308-BSU04280"/>
<dbReference type="EnsemblBacteria" id="CAB12235">
    <property type="protein sequence ID" value="CAB12235"/>
    <property type="gene ID" value="BSU_04280"/>
</dbReference>
<dbReference type="GeneID" id="938240"/>
<dbReference type="KEGG" id="bsu:BSU04280"/>
<dbReference type="PATRIC" id="fig|224308.179.peg.454"/>
<dbReference type="eggNOG" id="COG3706">
    <property type="taxonomic scope" value="Bacteria"/>
</dbReference>
<dbReference type="InParanoid" id="P96585"/>
<dbReference type="OrthoDB" id="2356833at2"/>
<dbReference type="PhylomeDB" id="P96585"/>
<dbReference type="BioCyc" id="BSUB:BSU04280-MONOMER"/>
<dbReference type="Proteomes" id="UP000001570">
    <property type="component" value="Chromosome"/>
</dbReference>
<dbReference type="GO" id="GO:0005886">
    <property type="term" value="C:plasma membrane"/>
    <property type="evidence" value="ECO:0007669"/>
    <property type="project" value="UniProtKB-SubCell"/>
</dbReference>
<dbReference type="Gene3D" id="3.30.70.270">
    <property type="match status" value="1"/>
</dbReference>
<dbReference type="InterPro" id="IPR000160">
    <property type="entry name" value="GGDEF_dom"/>
</dbReference>
<dbReference type="InterPro" id="IPR029787">
    <property type="entry name" value="Nucleotide_cyclase"/>
</dbReference>
<dbReference type="InterPro" id="IPR043128">
    <property type="entry name" value="Rev_trsase/Diguanyl_cyclase"/>
</dbReference>
<dbReference type="NCBIfam" id="TIGR00254">
    <property type="entry name" value="GGDEF"/>
    <property type="match status" value="1"/>
</dbReference>
<dbReference type="Pfam" id="PF00990">
    <property type="entry name" value="GGDEF"/>
    <property type="match status" value="1"/>
</dbReference>
<dbReference type="SMART" id="SM00267">
    <property type="entry name" value="GGDEF"/>
    <property type="match status" value="1"/>
</dbReference>
<dbReference type="SUPFAM" id="SSF55073">
    <property type="entry name" value="Nucleotide cyclase"/>
    <property type="match status" value="1"/>
</dbReference>
<dbReference type="PROSITE" id="PS50887">
    <property type="entry name" value="GGDEF"/>
    <property type="match status" value="1"/>
</dbReference>
<name>YDAK_BACSU</name>
<comment type="subcellular location">
    <subcellularLocation>
        <location evidence="3">Cell membrane</location>
        <topology evidence="3">Multi-pass membrane protein</topology>
    </subcellularLocation>
</comment>
<reference key="1">
    <citation type="journal article" date="1997" name="Mol. Gen. Genet.">
        <title>Characterization of an lrp-like (lrpC) gene from Bacillus subtilis.</title>
        <authorList>
            <person name="Beloin C."/>
            <person name="Ayora S."/>
            <person name="Exley R."/>
            <person name="Hirschbein L."/>
            <person name="Ogasawara N."/>
            <person name="Kasahara Y."/>
            <person name="Alonso J.C."/>
            <person name="Le Hegarat F."/>
        </authorList>
    </citation>
    <scope>NUCLEOTIDE SEQUENCE [GENOMIC DNA]</scope>
    <source>
        <strain>168</strain>
    </source>
</reference>
<reference key="2">
    <citation type="submission" date="1997-03" db="EMBL/GenBank/DDBJ databases">
        <title>A 148 kbp sequence of the region between 35 and 47 degree of the Bacillus subtilis genome.</title>
        <authorList>
            <person name="Kasahara Y."/>
            <person name="Nakai S."/>
            <person name="Lee S."/>
            <person name="Sadaie Y."/>
            <person name="Ogasawara N."/>
        </authorList>
    </citation>
    <scope>NUCLEOTIDE SEQUENCE [GENOMIC DNA]</scope>
    <source>
        <strain>168</strain>
    </source>
</reference>
<reference key="3">
    <citation type="journal article" date="1997" name="Nature">
        <title>The complete genome sequence of the Gram-positive bacterium Bacillus subtilis.</title>
        <authorList>
            <person name="Kunst F."/>
            <person name="Ogasawara N."/>
            <person name="Moszer I."/>
            <person name="Albertini A.M."/>
            <person name="Alloni G."/>
            <person name="Azevedo V."/>
            <person name="Bertero M.G."/>
            <person name="Bessieres P."/>
            <person name="Bolotin A."/>
            <person name="Borchert S."/>
            <person name="Borriss R."/>
            <person name="Boursier L."/>
            <person name="Brans A."/>
            <person name="Braun M."/>
            <person name="Brignell S.C."/>
            <person name="Bron S."/>
            <person name="Brouillet S."/>
            <person name="Bruschi C.V."/>
            <person name="Caldwell B."/>
            <person name="Capuano V."/>
            <person name="Carter N.M."/>
            <person name="Choi S.-K."/>
            <person name="Codani J.-J."/>
            <person name="Connerton I.F."/>
            <person name="Cummings N.J."/>
            <person name="Daniel R.A."/>
            <person name="Denizot F."/>
            <person name="Devine K.M."/>
            <person name="Duesterhoeft A."/>
            <person name="Ehrlich S.D."/>
            <person name="Emmerson P.T."/>
            <person name="Entian K.-D."/>
            <person name="Errington J."/>
            <person name="Fabret C."/>
            <person name="Ferrari E."/>
            <person name="Foulger D."/>
            <person name="Fritz C."/>
            <person name="Fujita M."/>
            <person name="Fujita Y."/>
            <person name="Fuma S."/>
            <person name="Galizzi A."/>
            <person name="Galleron N."/>
            <person name="Ghim S.-Y."/>
            <person name="Glaser P."/>
            <person name="Goffeau A."/>
            <person name="Golightly E.J."/>
            <person name="Grandi G."/>
            <person name="Guiseppi G."/>
            <person name="Guy B.J."/>
            <person name="Haga K."/>
            <person name="Haiech J."/>
            <person name="Harwood C.R."/>
            <person name="Henaut A."/>
            <person name="Hilbert H."/>
            <person name="Holsappel S."/>
            <person name="Hosono S."/>
            <person name="Hullo M.-F."/>
            <person name="Itaya M."/>
            <person name="Jones L.-M."/>
            <person name="Joris B."/>
            <person name="Karamata D."/>
            <person name="Kasahara Y."/>
            <person name="Klaerr-Blanchard M."/>
            <person name="Klein C."/>
            <person name="Kobayashi Y."/>
            <person name="Koetter P."/>
            <person name="Koningstein G."/>
            <person name="Krogh S."/>
            <person name="Kumano M."/>
            <person name="Kurita K."/>
            <person name="Lapidus A."/>
            <person name="Lardinois S."/>
            <person name="Lauber J."/>
            <person name="Lazarevic V."/>
            <person name="Lee S.-M."/>
            <person name="Levine A."/>
            <person name="Liu H."/>
            <person name="Masuda S."/>
            <person name="Mauel C."/>
            <person name="Medigue C."/>
            <person name="Medina N."/>
            <person name="Mellado R.P."/>
            <person name="Mizuno M."/>
            <person name="Moestl D."/>
            <person name="Nakai S."/>
            <person name="Noback M."/>
            <person name="Noone D."/>
            <person name="O'Reilly M."/>
            <person name="Ogawa K."/>
            <person name="Ogiwara A."/>
            <person name="Oudega B."/>
            <person name="Park S.-H."/>
            <person name="Parro V."/>
            <person name="Pohl T.M."/>
            <person name="Portetelle D."/>
            <person name="Porwollik S."/>
            <person name="Prescott A.M."/>
            <person name="Presecan E."/>
            <person name="Pujic P."/>
            <person name="Purnelle B."/>
            <person name="Rapoport G."/>
            <person name="Rey M."/>
            <person name="Reynolds S."/>
            <person name="Rieger M."/>
            <person name="Rivolta C."/>
            <person name="Rocha E."/>
            <person name="Roche B."/>
            <person name="Rose M."/>
            <person name="Sadaie Y."/>
            <person name="Sato T."/>
            <person name="Scanlan E."/>
            <person name="Schleich S."/>
            <person name="Schroeter R."/>
            <person name="Scoffone F."/>
            <person name="Sekiguchi J."/>
            <person name="Sekowska A."/>
            <person name="Seror S.J."/>
            <person name="Serror P."/>
            <person name="Shin B.-S."/>
            <person name="Soldo B."/>
            <person name="Sorokin A."/>
            <person name="Tacconi E."/>
            <person name="Takagi T."/>
            <person name="Takahashi H."/>
            <person name="Takemaru K."/>
            <person name="Takeuchi M."/>
            <person name="Tamakoshi A."/>
            <person name="Tanaka T."/>
            <person name="Terpstra P."/>
            <person name="Tognoni A."/>
            <person name="Tosato V."/>
            <person name="Uchiyama S."/>
            <person name="Vandenbol M."/>
            <person name="Vannier F."/>
            <person name="Vassarotti A."/>
            <person name="Viari A."/>
            <person name="Wambutt R."/>
            <person name="Wedler E."/>
            <person name="Wedler H."/>
            <person name="Weitzenegger T."/>
            <person name="Winters P."/>
            <person name="Wipat A."/>
            <person name="Yamamoto H."/>
            <person name="Yamane K."/>
            <person name="Yasumoto K."/>
            <person name="Yata K."/>
            <person name="Yoshida K."/>
            <person name="Yoshikawa H.-F."/>
            <person name="Zumstein E."/>
            <person name="Yoshikawa H."/>
            <person name="Danchin A."/>
        </authorList>
    </citation>
    <scope>NUCLEOTIDE SEQUENCE [LARGE SCALE GENOMIC DNA]</scope>
    <source>
        <strain>168</strain>
    </source>
</reference>
<accession>P96585</accession>
<accession>Q797M5</accession>
<protein>
    <recommendedName>
        <fullName>Uncharacterized membrane protein YdaK</fullName>
    </recommendedName>
</protein>
<organism>
    <name type="scientific">Bacillus subtilis (strain 168)</name>
    <dbReference type="NCBI Taxonomy" id="224308"/>
    <lineage>
        <taxon>Bacteria</taxon>
        <taxon>Bacillati</taxon>
        <taxon>Bacillota</taxon>
        <taxon>Bacilli</taxon>
        <taxon>Bacillales</taxon>
        <taxon>Bacillaceae</taxon>
        <taxon>Bacillus</taxon>
    </lineage>
</organism>
<proteinExistence type="predicted"/>
<keyword id="KW-1003">Cell membrane</keyword>
<keyword id="KW-0472">Membrane</keyword>
<keyword id="KW-1185">Reference proteome</keyword>
<keyword id="KW-0812">Transmembrane</keyword>
<keyword id="KW-1133">Transmembrane helix</keyword>
<sequence>MKISFSESQKLFAYFSGLIAALSLFIYYVSAQQSEGALILCITFGVIAAGIWFGPIYALAVTLIVLFVLGTLMMFFQTGQTSLFPAEEGLRMLVVWGIALLLFSFISGRIHDITAELRRSMTRLQSEIKSYVAVDRVTGFDNKQRMKLELSEEIKRAERYGNSFVFLLLHMHYFKEFKSLYGEKETDRLFQYVGQQIRTSVRETDKKFRPSDERIGIVLTHTPAEHMPAVLTKLKKQLDTYQLENGKYVSLTFHVCYLPYRNDIQTADQFLEELENEMMMNEL</sequence>